<evidence type="ECO:0000250" key="1"/>
<evidence type="ECO:0000305" key="2"/>
<sequence length="71" mass="8408">MERARDRLHLRRTTEQHVPEVEVQVKRRRTASLNNQECHVYLRRSQQQQVPVVDFQAELIQAFLAETPRGG</sequence>
<proteinExistence type="inferred from homology"/>
<protein>
    <recommendedName>
        <fullName>SNRPN upstream reading frame protein</fullName>
    </recommendedName>
</protein>
<comment type="subcellular location">
    <subcellularLocation>
        <location evidence="1">Nucleus</location>
    </subcellularLocation>
</comment>
<comment type="miscellaneous">
    <text>Encoded on a bicistronic transcript that code for two proteins, SNRPN and SNURF.</text>
</comment>
<comment type="similarity">
    <text evidence="2">Belongs to the SNURF family.</text>
</comment>
<organism>
    <name type="scientific">Bos taurus</name>
    <name type="common">Bovine</name>
    <dbReference type="NCBI Taxonomy" id="9913"/>
    <lineage>
        <taxon>Eukaryota</taxon>
        <taxon>Metazoa</taxon>
        <taxon>Chordata</taxon>
        <taxon>Craniata</taxon>
        <taxon>Vertebrata</taxon>
        <taxon>Euteleostomi</taxon>
        <taxon>Mammalia</taxon>
        <taxon>Eutheria</taxon>
        <taxon>Laurasiatheria</taxon>
        <taxon>Artiodactyla</taxon>
        <taxon>Ruminantia</taxon>
        <taxon>Pecora</taxon>
        <taxon>Bovidae</taxon>
        <taxon>Bovinae</taxon>
        <taxon>Bos</taxon>
    </lineage>
</organism>
<dbReference type="EMBL" id="AF101040">
    <property type="protein sequence ID" value="AAD31387.1"/>
    <property type="molecule type" value="mRNA"/>
</dbReference>
<dbReference type="RefSeq" id="NP_776888.1">
    <property type="nucleotide sequence ID" value="NM_174463.3"/>
</dbReference>
<dbReference type="FunCoup" id="Q9XS96">
    <property type="interactions" value="19"/>
</dbReference>
<dbReference type="GeneID" id="282076"/>
<dbReference type="KEGG" id="bta:282076"/>
<dbReference type="CTD" id="8926"/>
<dbReference type="InParanoid" id="Q9XS96"/>
<dbReference type="OrthoDB" id="2020720at2759"/>
<dbReference type="Proteomes" id="UP000009136">
    <property type="component" value="Unplaced"/>
</dbReference>
<dbReference type="GO" id="GO:0016607">
    <property type="term" value="C:nuclear speck"/>
    <property type="evidence" value="ECO:0000318"/>
    <property type="project" value="GO_Central"/>
</dbReference>
<dbReference type="InterPro" id="IPR009847">
    <property type="entry name" value="SNURF"/>
</dbReference>
<dbReference type="PANTHER" id="PTHR14508">
    <property type="entry name" value="SNRPN UPSTREAM READING FRAME PROTEIN, SNURF"/>
    <property type="match status" value="1"/>
</dbReference>
<dbReference type="PANTHER" id="PTHR14508:SF2">
    <property type="entry name" value="SNRPN UPSTREAM READING FRAME PROTEIN-RELATED"/>
    <property type="match status" value="1"/>
</dbReference>
<dbReference type="Pfam" id="PF07192">
    <property type="entry name" value="SNURF"/>
    <property type="match status" value="1"/>
</dbReference>
<accession>Q9XS96</accession>
<reference key="1">
    <citation type="journal article" date="1999" name="Proc. Natl. Acad. Sci. U.S.A.">
        <title>An imprinted, mammalian bicistronic transcript encodes two independent proteins.</title>
        <authorList>
            <person name="Gray T.A."/>
            <person name="Saitoh S."/>
            <person name="Nicholls R.D."/>
        </authorList>
    </citation>
    <scope>NUCLEOTIDE SEQUENCE [MRNA]</scope>
</reference>
<gene>
    <name type="primary">SNURF</name>
</gene>
<feature type="chain" id="PRO_0000312992" description="SNRPN upstream reading frame protein">
    <location>
        <begin position="1"/>
        <end position="71"/>
    </location>
</feature>
<keyword id="KW-0539">Nucleus</keyword>
<keyword id="KW-1185">Reference proteome</keyword>
<name>SNURF_BOVIN</name>